<evidence type="ECO:0000250" key="1">
    <source>
        <dbReference type="UniProtKB" id="A0A0D4WTV1"/>
    </source>
</evidence>
<evidence type="ECO:0000250" key="2">
    <source>
        <dbReference type="UniProtKB" id="A0A0D4WV12"/>
    </source>
</evidence>
<evidence type="ECO:0000250" key="3">
    <source>
        <dbReference type="UniProtKB" id="P0CE80"/>
    </source>
</evidence>
<evidence type="ECO:0000250" key="4">
    <source>
        <dbReference type="UniProtKB" id="Q4ZFU2"/>
    </source>
</evidence>
<evidence type="ECO:0000250" key="5">
    <source>
        <dbReference type="UniProtKB" id="Q8I914"/>
    </source>
</evidence>
<evidence type="ECO:0000303" key="6">
    <source>
    </source>
</evidence>
<evidence type="ECO:0000305" key="7"/>
<evidence type="ECO:0000305" key="8">
    <source>
    </source>
</evidence>
<keyword id="KW-0204">Cytolysis</keyword>
<keyword id="KW-1061">Dermonecrotic toxin</keyword>
<keyword id="KW-1015">Disulfide bond</keyword>
<keyword id="KW-0354">Hemolysis</keyword>
<keyword id="KW-0442">Lipid degradation</keyword>
<keyword id="KW-0443">Lipid metabolism</keyword>
<keyword id="KW-0456">Lyase</keyword>
<keyword id="KW-0460">Magnesium</keyword>
<keyword id="KW-0479">Metal-binding</keyword>
<keyword id="KW-0964">Secreted</keyword>
<keyword id="KW-0800">Toxin</keyword>
<proteinExistence type="evidence at transcript level"/>
<organism>
    <name type="scientific">Loxosceles spadicea</name>
    <name type="common">Recluse spider</name>
    <dbReference type="NCBI Taxonomy" id="571530"/>
    <lineage>
        <taxon>Eukaryota</taxon>
        <taxon>Metazoa</taxon>
        <taxon>Ecdysozoa</taxon>
        <taxon>Arthropoda</taxon>
        <taxon>Chelicerata</taxon>
        <taxon>Arachnida</taxon>
        <taxon>Araneae</taxon>
        <taxon>Araneomorphae</taxon>
        <taxon>Haplogynae</taxon>
        <taxon>Scytodoidea</taxon>
        <taxon>Sicariidae</taxon>
        <taxon>Loxosceles</taxon>
    </lineage>
</organism>
<accession>C0JAS8</accession>
<accession>C0JAS9</accession>
<comment type="function">
    <text evidence="1 3">Dermonecrotic toxins cleave the phosphodiester linkage between the phosphate and headgroup of certain phospholipids (sphingolipid and lysolipid substrates), forming an alcohol (often choline) and a cyclic phosphate (By similarity). This toxin acts on sphingomyelin (SM) (By similarity). It may also act on ceramide phosphoethanolamine (CPE), lysophosphatidylcholine (LPC) and lysophosphatidylethanolamine (LPE), but not on lysophosphatidylserine (LPS), and lysophosphatidylglycerol (LPG) (By similarity). It acts by transphosphatidylation, releasing exclusively cyclic phosphate products as second products (By similarity). Induces dermonecrosis, hemolysis, increased vascular permeability, edema, inflammatory response, and platelet aggregation (By similarity).</text>
</comment>
<comment type="catalytic activity">
    <reaction evidence="1">
        <text>an N-(acyl)-sphingosylphosphocholine = an N-(acyl)-sphingosyl-1,3-cyclic phosphate + choline</text>
        <dbReference type="Rhea" id="RHEA:60652"/>
        <dbReference type="ChEBI" id="CHEBI:15354"/>
        <dbReference type="ChEBI" id="CHEBI:64583"/>
        <dbReference type="ChEBI" id="CHEBI:143892"/>
    </reaction>
</comment>
<comment type="catalytic activity">
    <reaction evidence="1">
        <text>an N-(acyl)-sphingosylphosphoethanolamine = an N-(acyl)-sphingosyl-1,3-cyclic phosphate + ethanolamine</text>
        <dbReference type="Rhea" id="RHEA:60648"/>
        <dbReference type="ChEBI" id="CHEBI:57603"/>
        <dbReference type="ChEBI" id="CHEBI:143891"/>
        <dbReference type="ChEBI" id="CHEBI:143892"/>
    </reaction>
</comment>
<comment type="catalytic activity">
    <reaction evidence="1">
        <text>a 1-acyl-sn-glycero-3-phosphocholine = a 1-acyl-sn-glycero-2,3-cyclic phosphate + choline</text>
        <dbReference type="Rhea" id="RHEA:60700"/>
        <dbReference type="ChEBI" id="CHEBI:15354"/>
        <dbReference type="ChEBI" id="CHEBI:58168"/>
        <dbReference type="ChEBI" id="CHEBI:143947"/>
    </reaction>
</comment>
<comment type="catalytic activity">
    <reaction evidence="1">
        <text>a 1-acyl-sn-glycero-3-phosphoethanolamine = a 1-acyl-sn-glycero-2,3-cyclic phosphate + ethanolamine</text>
        <dbReference type="Rhea" id="RHEA:60704"/>
        <dbReference type="ChEBI" id="CHEBI:57603"/>
        <dbReference type="ChEBI" id="CHEBI:64381"/>
        <dbReference type="ChEBI" id="CHEBI:143947"/>
    </reaction>
</comment>
<comment type="cofactor">
    <cofactor evidence="5">
        <name>Mg(2+)</name>
        <dbReference type="ChEBI" id="CHEBI:18420"/>
    </cofactor>
    <text evidence="5">Binds 1 Mg(2+) ion per subunit.</text>
</comment>
<comment type="subcellular location">
    <subcellularLocation>
        <location evidence="8">Secreted</location>
    </subcellularLocation>
</comment>
<comment type="tissue specificity">
    <text evidence="8">Expressed by the venom gland.</text>
</comment>
<comment type="similarity">
    <text evidence="7">Belongs to the arthropod phospholipase D family. Class II subfamily.</text>
</comment>
<comment type="caution">
    <text evidence="1 2 4">The most common activity assay for dermonecrotic toxins detects enzymatic activity by monitoring choline release from substrate. Liberation of choline from sphingomyelin (SM) or lysophosphatidylcholine (LPC) is commonly assumed to result from substrate hydrolysis, giving either ceramide-1-phosphate (C1P) or lysophosphatidic acid (LPA), respectively, as a second product. However, two studies from Lajoie and colleagues (2013 and 2015) report the observation of exclusive formation of cyclic phosphate products as second products, resulting from intramolecular transphosphatidylation. Cyclic phosphates have vastly different biological properties from their monoester counterparts, and they may be relevant to the pathology of brown spider envenomation.</text>
</comment>
<sequence>WIMGHMVNAIGQIDEFVNLGANSIETDVSFDDSANPQYTYHGVPCDCGRSCLKWENYNDFLKGLRSATTPGNSKYQSKLVLVVFDLKTGSLYDNQANEAGKKLAKNLLQHYWNNGNNGGRAYIVLSIPDLNHYPLIKGFTDTLTQEGHPELLDKVGFDFSGNDAIGDVANAYKKAGVTGHVWQSDGITNCLLRGLTRVREAVANRDSGKGYINKVYYWTVDKRASTRDALDAGVDGVMTNYPDVITDVMNEAAYKNKFRLATYEDNPWETFKK</sequence>
<protein>
    <recommendedName>
        <fullName evidence="6">Dermonecrotic toxin LspaSicTox-alphaIA2iii</fullName>
        <ecNumber evidence="4">4.6.1.-</ecNumber>
    </recommendedName>
    <alternativeName>
        <fullName>Phospholipase D</fullName>
        <shortName>PLD</shortName>
    </alternativeName>
    <alternativeName>
        <fullName>Sphingomyelin phosphodiesterase D</fullName>
        <shortName>SMD</shortName>
        <shortName>SMase D</shortName>
        <shortName>Sphingomyelinase D</shortName>
    </alternativeName>
</protein>
<dbReference type="EC" id="4.6.1.-" evidence="4"/>
<dbReference type="EMBL" id="FJ171363">
    <property type="protein sequence ID" value="ACN48859.1"/>
    <property type="molecule type" value="mRNA"/>
</dbReference>
<dbReference type="EMBL" id="FJ171364">
    <property type="protein sequence ID" value="ACN48860.1"/>
    <property type="molecule type" value="mRNA"/>
</dbReference>
<dbReference type="SMR" id="C0JAS8"/>
<dbReference type="GO" id="GO:0005576">
    <property type="term" value="C:extracellular region"/>
    <property type="evidence" value="ECO:0007669"/>
    <property type="project" value="UniProtKB-SubCell"/>
</dbReference>
<dbReference type="GO" id="GO:0016829">
    <property type="term" value="F:lyase activity"/>
    <property type="evidence" value="ECO:0007669"/>
    <property type="project" value="UniProtKB-KW"/>
</dbReference>
<dbReference type="GO" id="GO:0046872">
    <property type="term" value="F:metal ion binding"/>
    <property type="evidence" value="ECO:0007669"/>
    <property type="project" value="UniProtKB-KW"/>
</dbReference>
<dbReference type="GO" id="GO:0008081">
    <property type="term" value="F:phosphoric diester hydrolase activity"/>
    <property type="evidence" value="ECO:0007669"/>
    <property type="project" value="InterPro"/>
</dbReference>
<dbReference type="GO" id="GO:0090729">
    <property type="term" value="F:toxin activity"/>
    <property type="evidence" value="ECO:0007669"/>
    <property type="project" value="UniProtKB-KW"/>
</dbReference>
<dbReference type="GO" id="GO:0031640">
    <property type="term" value="P:killing of cells of another organism"/>
    <property type="evidence" value="ECO:0007669"/>
    <property type="project" value="UniProtKB-KW"/>
</dbReference>
<dbReference type="GO" id="GO:0016042">
    <property type="term" value="P:lipid catabolic process"/>
    <property type="evidence" value="ECO:0007669"/>
    <property type="project" value="UniProtKB-KW"/>
</dbReference>
<dbReference type="CDD" id="cd08576">
    <property type="entry name" value="GDPD_like_SMaseD_PLD"/>
    <property type="match status" value="1"/>
</dbReference>
<dbReference type="Gene3D" id="3.20.20.190">
    <property type="entry name" value="Phosphatidylinositol (PI) phosphodiesterase"/>
    <property type="match status" value="1"/>
</dbReference>
<dbReference type="InterPro" id="IPR017946">
    <property type="entry name" value="PLC-like_Pdiesterase_TIM-brl"/>
</dbReference>
<dbReference type="Pfam" id="PF13653">
    <property type="entry name" value="GDPD_2"/>
    <property type="match status" value="1"/>
</dbReference>
<dbReference type="SUPFAM" id="SSF51695">
    <property type="entry name" value="PLC-like phosphodiesterases"/>
    <property type="match status" value="1"/>
</dbReference>
<reference key="1">
    <citation type="journal article" date="2009" name="Mol. Biol. Evol.">
        <title>Molecular evolution, functional variation, and proposed nomenclature of the gene family that includes sphingomyelinase D in sicariid spider venoms.</title>
        <authorList>
            <person name="Binford G.J."/>
            <person name="Bodner M.R."/>
            <person name="Cordes M.H."/>
            <person name="Baldwin K.L."/>
            <person name="Rynerson M.R."/>
            <person name="Burns S.N."/>
            <person name="Zobel-Thropp P.A."/>
        </authorList>
    </citation>
    <scope>NUCLEOTIDE SEQUENCE [MRNA]</scope>
    <scope>NOMENCLATURE</scope>
    <source>
        <tissue>Venom gland</tissue>
    </source>
</reference>
<name>A1I3_LOXSP</name>
<feature type="chain" id="PRO_0000392745" description="Dermonecrotic toxin LspaSicTox-alphaIA2iii">
    <location>
        <begin position="1" status="less than"/>
        <end position="273"/>
    </location>
</feature>
<feature type="active site" evidence="5">
    <location>
        <position position="5"/>
    </location>
</feature>
<feature type="active site" description="Nucleophile" evidence="5">
    <location>
        <position position="41"/>
    </location>
</feature>
<feature type="binding site" evidence="5">
    <location>
        <position position="25"/>
    </location>
    <ligand>
        <name>Mg(2+)</name>
        <dbReference type="ChEBI" id="CHEBI:18420"/>
    </ligand>
</feature>
<feature type="binding site" evidence="5">
    <location>
        <position position="27"/>
    </location>
    <ligand>
        <name>Mg(2+)</name>
        <dbReference type="ChEBI" id="CHEBI:18420"/>
    </ligand>
</feature>
<feature type="binding site" evidence="5">
    <location>
        <position position="85"/>
    </location>
    <ligand>
        <name>Mg(2+)</name>
        <dbReference type="ChEBI" id="CHEBI:18420"/>
    </ligand>
</feature>
<feature type="disulfide bond" evidence="3">
    <location>
        <begin position="45"/>
        <end position="51"/>
    </location>
</feature>
<feature type="disulfide bond" evidence="3">
    <location>
        <begin position="47"/>
        <end position="190"/>
    </location>
</feature>
<feature type="non-terminal residue">
    <location>
        <position position="1"/>
    </location>
</feature>